<accession>A0L0B8</accession>
<reference key="1">
    <citation type="submission" date="2006-09" db="EMBL/GenBank/DDBJ databases">
        <title>Complete sequence of chromosome 1 of Shewanella sp. ANA-3.</title>
        <authorList>
            <person name="Copeland A."/>
            <person name="Lucas S."/>
            <person name="Lapidus A."/>
            <person name="Barry K."/>
            <person name="Detter J.C."/>
            <person name="Glavina del Rio T."/>
            <person name="Hammon N."/>
            <person name="Israni S."/>
            <person name="Dalin E."/>
            <person name="Tice H."/>
            <person name="Pitluck S."/>
            <person name="Chertkov O."/>
            <person name="Brettin T."/>
            <person name="Bruce D."/>
            <person name="Han C."/>
            <person name="Tapia R."/>
            <person name="Gilna P."/>
            <person name="Schmutz J."/>
            <person name="Larimer F."/>
            <person name="Land M."/>
            <person name="Hauser L."/>
            <person name="Kyrpides N."/>
            <person name="Kim E."/>
            <person name="Newman D."/>
            <person name="Salticov C."/>
            <person name="Konstantinidis K."/>
            <person name="Klappenback J."/>
            <person name="Tiedje J."/>
            <person name="Richardson P."/>
        </authorList>
    </citation>
    <scope>NUCLEOTIDE SEQUENCE [LARGE SCALE GENOMIC DNA]</scope>
    <source>
        <strain>ANA-3</strain>
    </source>
</reference>
<feature type="chain" id="PRO_0000325576" description="Dihydroorotase">
    <location>
        <begin position="1"/>
        <end position="343"/>
    </location>
</feature>
<feature type="active site" evidence="1">
    <location>
        <position position="247"/>
    </location>
</feature>
<feature type="binding site" evidence="1">
    <location>
        <position position="13"/>
    </location>
    <ligand>
        <name>Zn(2+)</name>
        <dbReference type="ChEBI" id="CHEBI:29105"/>
        <label>1</label>
    </ligand>
</feature>
<feature type="binding site" evidence="1">
    <location>
        <begin position="15"/>
        <end position="17"/>
    </location>
    <ligand>
        <name>substrate</name>
    </ligand>
</feature>
<feature type="binding site" evidence="1">
    <location>
        <position position="15"/>
    </location>
    <ligand>
        <name>Zn(2+)</name>
        <dbReference type="ChEBI" id="CHEBI:29105"/>
        <label>1</label>
    </ligand>
</feature>
<feature type="binding site" evidence="1">
    <location>
        <position position="41"/>
    </location>
    <ligand>
        <name>substrate</name>
    </ligand>
</feature>
<feature type="binding site" description="via carbamate group" evidence="1">
    <location>
        <position position="99"/>
    </location>
    <ligand>
        <name>Zn(2+)</name>
        <dbReference type="ChEBI" id="CHEBI:29105"/>
        <label>1</label>
    </ligand>
</feature>
<feature type="binding site" description="via carbamate group" evidence="1">
    <location>
        <position position="99"/>
    </location>
    <ligand>
        <name>Zn(2+)</name>
        <dbReference type="ChEBI" id="CHEBI:29105"/>
        <label>2</label>
    </ligand>
</feature>
<feature type="binding site" evidence="1">
    <location>
        <position position="136"/>
    </location>
    <ligand>
        <name>substrate</name>
    </ligand>
</feature>
<feature type="binding site" evidence="1">
    <location>
        <position position="136"/>
    </location>
    <ligand>
        <name>Zn(2+)</name>
        <dbReference type="ChEBI" id="CHEBI:29105"/>
        <label>2</label>
    </ligand>
</feature>
<feature type="binding site" evidence="1">
    <location>
        <position position="174"/>
    </location>
    <ligand>
        <name>Zn(2+)</name>
        <dbReference type="ChEBI" id="CHEBI:29105"/>
        <label>2</label>
    </ligand>
</feature>
<feature type="binding site" evidence="1">
    <location>
        <position position="219"/>
    </location>
    <ligand>
        <name>substrate</name>
    </ligand>
</feature>
<feature type="binding site" evidence="1">
    <location>
        <position position="247"/>
    </location>
    <ligand>
        <name>Zn(2+)</name>
        <dbReference type="ChEBI" id="CHEBI:29105"/>
        <label>1</label>
    </ligand>
</feature>
<feature type="binding site" evidence="1">
    <location>
        <position position="251"/>
    </location>
    <ligand>
        <name>substrate</name>
    </ligand>
</feature>
<feature type="binding site" evidence="1">
    <location>
        <position position="263"/>
    </location>
    <ligand>
        <name>substrate</name>
    </ligand>
</feature>
<feature type="modified residue" description="N6-carboxylysine" evidence="1">
    <location>
        <position position="99"/>
    </location>
</feature>
<proteinExistence type="inferred from homology"/>
<evidence type="ECO:0000255" key="1">
    <source>
        <dbReference type="HAMAP-Rule" id="MF_00219"/>
    </source>
</evidence>
<evidence type="ECO:0000305" key="2"/>
<sequence length="343" mass="37816">MTTLTITRPDDWHIHLRDGAQLKDTVRDISRYMGRAIVMPNLVPPAIDTETALAYYDRIKAQVPAGSQFEPLMVLYLTDKTSPEEIRKAKASGKIVAAKLYPAGATTNSDSGVTDLKNIYPALEAMQEVGMLFLVHGEVTDSSIDIFDRERVFIENILSKIVADFPKLKIVLEHITTKDAVDFVTQASDNVAATITAHHLLYNRNHMLAGGIRPHFYCLPILKRNTHQQALLGAAASGNKKFFLGTDSAPHAKDRKEAACGCAGSYTAHAAIELYAEAFESVNALDKLEAFASFNGPDFYNLPRNSDTITLVKKSWDVPVSYPLGDNNVVPIRAGEQIDWQVE</sequence>
<protein>
    <recommendedName>
        <fullName evidence="1">Dihydroorotase</fullName>
        <shortName evidence="1">DHOase</shortName>
        <ecNumber evidence="1">3.5.2.3</ecNumber>
    </recommendedName>
</protein>
<keyword id="KW-0378">Hydrolase</keyword>
<keyword id="KW-0479">Metal-binding</keyword>
<keyword id="KW-0665">Pyrimidine biosynthesis</keyword>
<keyword id="KW-0862">Zinc</keyword>
<gene>
    <name evidence="1" type="primary">pyrC</name>
    <name type="ordered locus">Shewana3_3263</name>
</gene>
<dbReference type="EC" id="3.5.2.3" evidence="1"/>
<dbReference type="EMBL" id="CP000469">
    <property type="protein sequence ID" value="ABK49487.1"/>
    <property type="status" value="ALT_INIT"/>
    <property type="molecule type" value="Genomic_DNA"/>
</dbReference>
<dbReference type="RefSeq" id="WP_023269013.1">
    <property type="nucleotide sequence ID" value="NC_008577.1"/>
</dbReference>
<dbReference type="SMR" id="A0L0B8"/>
<dbReference type="STRING" id="94122.Shewana3_3263"/>
<dbReference type="KEGG" id="shn:Shewana3_3263"/>
<dbReference type="eggNOG" id="COG0418">
    <property type="taxonomic scope" value="Bacteria"/>
</dbReference>
<dbReference type="HOGENOM" id="CLU_041558_1_0_6"/>
<dbReference type="OrthoDB" id="9808095at2"/>
<dbReference type="UniPathway" id="UPA00070">
    <property type="reaction ID" value="UER00117"/>
</dbReference>
<dbReference type="Proteomes" id="UP000002589">
    <property type="component" value="Chromosome"/>
</dbReference>
<dbReference type="GO" id="GO:0005829">
    <property type="term" value="C:cytosol"/>
    <property type="evidence" value="ECO:0007669"/>
    <property type="project" value="TreeGrafter"/>
</dbReference>
<dbReference type="GO" id="GO:0004151">
    <property type="term" value="F:dihydroorotase activity"/>
    <property type="evidence" value="ECO:0007669"/>
    <property type="project" value="UniProtKB-UniRule"/>
</dbReference>
<dbReference type="GO" id="GO:0008270">
    <property type="term" value="F:zinc ion binding"/>
    <property type="evidence" value="ECO:0007669"/>
    <property type="project" value="UniProtKB-UniRule"/>
</dbReference>
<dbReference type="GO" id="GO:0006207">
    <property type="term" value="P:'de novo' pyrimidine nucleobase biosynthetic process"/>
    <property type="evidence" value="ECO:0007669"/>
    <property type="project" value="TreeGrafter"/>
</dbReference>
<dbReference type="GO" id="GO:0044205">
    <property type="term" value="P:'de novo' UMP biosynthetic process"/>
    <property type="evidence" value="ECO:0007669"/>
    <property type="project" value="UniProtKB-UniRule"/>
</dbReference>
<dbReference type="CDD" id="cd01294">
    <property type="entry name" value="DHOase"/>
    <property type="match status" value="1"/>
</dbReference>
<dbReference type="FunFam" id="3.20.20.140:FF:000006">
    <property type="entry name" value="Dihydroorotase"/>
    <property type="match status" value="1"/>
</dbReference>
<dbReference type="Gene3D" id="3.20.20.140">
    <property type="entry name" value="Metal-dependent hydrolases"/>
    <property type="match status" value="1"/>
</dbReference>
<dbReference type="HAMAP" id="MF_00219">
    <property type="entry name" value="PyrC_classII"/>
    <property type="match status" value="1"/>
</dbReference>
<dbReference type="InterPro" id="IPR006680">
    <property type="entry name" value="Amidohydro-rel"/>
</dbReference>
<dbReference type="InterPro" id="IPR004721">
    <property type="entry name" value="DHOdimr"/>
</dbReference>
<dbReference type="InterPro" id="IPR002195">
    <property type="entry name" value="Dihydroorotase_CS"/>
</dbReference>
<dbReference type="InterPro" id="IPR032466">
    <property type="entry name" value="Metal_Hydrolase"/>
</dbReference>
<dbReference type="NCBIfam" id="TIGR00856">
    <property type="entry name" value="pyrC_dimer"/>
    <property type="match status" value="1"/>
</dbReference>
<dbReference type="PANTHER" id="PTHR43137">
    <property type="entry name" value="DIHYDROOROTASE"/>
    <property type="match status" value="1"/>
</dbReference>
<dbReference type="PANTHER" id="PTHR43137:SF1">
    <property type="entry name" value="DIHYDROOROTASE"/>
    <property type="match status" value="1"/>
</dbReference>
<dbReference type="Pfam" id="PF01979">
    <property type="entry name" value="Amidohydro_1"/>
    <property type="match status" value="1"/>
</dbReference>
<dbReference type="PIRSF" id="PIRSF001237">
    <property type="entry name" value="DHOdimr"/>
    <property type="match status" value="1"/>
</dbReference>
<dbReference type="SUPFAM" id="SSF51556">
    <property type="entry name" value="Metallo-dependent hydrolases"/>
    <property type="match status" value="1"/>
</dbReference>
<dbReference type="PROSITE" id="PS00482">
    <property type="entry name" value="DIHYDROOROTASE_1"/>
    <property type="match status" value="1"/>
</dbReference>
<dbReference type="PROSITE" id="PS00483">
    <property type="entry name" value="DIHYDROOROTASE_2"/>
    <property type="match status" value="1"/>
</dbReference>
<organism>
    <name type="scientific">Shewanella sp. (strain ANA-3)</name>
    <dbReference type="NCBI Taxonomy" id="94122"/>
    <lineage>
        <taxon>Bacteria</taxon>
        <taxon>Pseudomonadati</taxon>
        <taxon>Pseudomonadota</taxon>
        <taxon>Gammaproteobacteria</taxon>
        <taxon>Alteromonadales</taxon>
        <taxon>Shewanellaceae</taxon>
        <taxon>Shewanella</taxon>
    </lineage>
</organism>
<name>PYRC_SHESA</name>
<comment type="function">
    <text evidence="1">Catalyzes the reversible cyclization of carbamoyl aspartate to dihydroorotate.</text>
</comment>
<comment type="catalytic activity">
    <reaction evidence="1">
        <text>(S)-dihydroorotate + H2O = N-carbamoyl-L-aspartate + H(+)</text>
        <dbReference type="Rhea" id="RHEA:24296"/>
        <dbReference type="ChEBI" id="CHEBI:15377"/>
        <dbReference type="ChEBI" id="CHEBI:15378"/>
        <dbReference type="ChEBI" id="CHEBI:30864"/>
        <dbReference type="ChEBI" id="CHEBI:32814"/>
        <dbReference type="EC" id="3.5.2.3"/>
    </reaction>
</comment>
<comment type="cofactor">
    <cofactor evidence="1">
        <name>Zn(2+)</name>
        <dbReference type="ChEBI" id="CHEBI:29105"/>
    </cofactor>
    <text evidence="1">Binds 2 Zn(2+) ions per subunit.</text>
</comment>
<comment type="pathway">
    <text evidence="1">Pyrimidine metabolism; UMP biosynthesis via de novo pathway; (S)-dihydroorotate from bicarbonate: step 3/3.</text>
</comment>
<comment type="subunit">
    <text evidence="1">Homodimer.</text>
</comment>
<comment type="similarity">
    <text evidence="1">Belongs to the metallo-dependent hydrolases superfamily. DHOase family. Class II DHOase subfamily.</text>
</comment>
<comment type="sequence caution" evidence="2">
    <conflict type="erroneous initiation">
        <sequence resource="EMBL-CDS" id="ABK49487"/>
    </conflict>
</comment>